<keyword id="KW-0067">ATP-binding</keyword>
<keyword id="KW-0143">Chaperone</keyword>
<keyword id="KW-0547">Nucleotide-binding</keyword>
<keyword id="KW-0597">Phosphoprotein</keyword>
<keyword id="KW-1185">Reference proteome</keyword>
<keyword id="KW-0346">Stress response</keyword>
<reference key="1">
    <citation type="submission" date="2003-10" db="EMBL/GenBank/DDBJ databases">
        <title>The complete genome sequence of the alkaliphilic Bacillus clausii KSM-K16.</title>
        <authorList>
            <person name="Takaki Y."/>
            <person name="Kageyama Y."/>
            <person name="Shimamura S."/>
            <person name="Suzuki H."/>
            <person name="Nishi S."/>
            <person name="Hatada Y."/>
            <person name="Kawai S."/>
            <person name="Ito S."/>
            <person name="Horikoshi K."/>
        </authorList>
    </citation>
    <scope>NUCLEOTIDE SEQUENCE [LARGE SCALE GENOMIC DNA]</scope>
    <source>
        <strain>KSM-K16</strain>
    </source>
</reference>
<evidence type="ECO:0000255" key="1">
    <source>
        <dbReference type="HAMAP-Rule" id="MF_00332"/>
    </source>
</evidence>
<evidence type="ECO:0000256" key="2">
    <source>
        <dbReference type="SAM" id="MobiDB-lite"/>
    </source>
</evidence>
<proteinExistence type="inferred from homology"/>
<accession>Q5WHG1</accession>
<dbReference type="EMBL" id="AP006627">
    <property type="protein sequence ID" value="BAD64194.1"/>
    <property type="molecule type" value="Genomic_DNA"/>
</dbReference>
<dbReference type="RefSeq" id="WP_011246503.1">
    <property type="nucleotide sequence ID" value="NC_006582.1"/>
</dbReference>
<dbReference type="SMR" id="Q5WHG1"/>
<dbReference type="STRING" id="66692.ABC1659"/>
<dbReference type="KEGG" id="bcl:ABC1659"/>
<dbReference type="eggNOG" id="COG0443">
    <property type="taxonomic scope" value="Bacteria"/>
</dbReference>
<dbReference type="HOGENOM" id="CLU_005965_2_4_9"/>
<dbReference type="OrthoDB" id="9766019at2"/>
<dbReference type="Proteomes" id="UP000001168">
    <property type="component" value="Chromosome"/>
</dbReference>
<dbReference type="GO" id="GO:0005524">
    <property type="term" value="F:ATP binding"/>
    <property type="evidence" value="ECO:0007669"/>
    <property type="project" value="UniProtKB-UniRule"/>
</dbReference>
<dbReference type="GO" id="GO:0140662">
    <property type="term" value="F:ATP-dependent protein folding chaperone"/>
    <property type="evidence" value="ECO:0007669"/>
    <property type="project" value="InterPro"/>
</dbReference>
<dbReference type="GO" id="GO:0051082">
    <property type="term" value="F:unfolded protein binding"/>
    <property type="evidence" value="ECO:0007669"/>
    <property type="project" value="InterPro"/>
</dbReference>
<dbReference type="CDD" id="cd10234">
    <property type="entry name" value="ASKHA_NBD_HSP70_DnaK-like"/>
    <property type="match status" value="1"/>
</dbReference>
<dbReference type="FunFam" id="2.60.34.10:FF:000014">
    <property type="entry name" value="Chaperone protein DnaK HSP70"/>
    <property type="match status" value="1"/>
</dbReference>
<dbReference type="FunFam" id="1.20.1270.10:FF:000001">
    <property type="entry name" value="Molecular chaperone DnaK"/>
    <property type="match status" value="1"/>
</dbReference>
<dbReference type="FunFam" id="3.30.420.40:FF:000071">
    <property type="entry name" value="Molecular chaperone DnaK"/>
    <property type="match status" value="1"/>
</dbReference>
<dbReference type="FunFam" id="3.90.640.10:FF:000003">
    <property type="entry name" value="Molecular chaperone DnaK"/>
    <property type="match status" value="1"/>
</dbReference>
<dbReference type="Gene3D" id="1.20.1270.10">
    <property type="match status" value="1"/>
</dbReference>
<dbReference type="Gene3D" id="3.30.420.40">
    <property type="match status" value="2"/>
</dbReference>
<dbReference type="Gene3D" id="3.90.640.10">
    <property type="entry name" value="Actin, Chain A, domain 4"/>
    <property type="match status" value="1"/>
</dbReference>
<dbReference type="Gene3D" id="2.60.34.10">
    <property type="entry name" value="Substrate Binding Domain Of DNAk, Chain A, domain 1"/>
    <property type="match status" value="1"/>
</dbReference>
<dbReference type="HAMAP" id="MF_00332">
    <property type="entry name" value="DnaK"/>
    <property type="match status" value="1"/>
</dbReference>
<dbReference type="InterPro" id="IPR043129">
    <property type="entry name" value="ATPase_NBD"/>
</dbReference>
<dbReference type="InterPro" id="IPR012725">
    <property type="entry name" value="Chaperone_DnaK"/>
</dbReference>
<dbReference type="InterPro" id="IPR018181">
    <property type="entry name" value="Heat_shock_70_CS"/>
</dbReference>
<dbReference type="InterPro" id="IPR029048">
    <property type="entry name" value="HSP70_C_sf"/>
</dbReference>
<dbReference type="InterPro" id="IPR029047">
    <property type="entry name" value="HSP70_peptide-bd_sf"/>
</dbReference>
<dbReference type="InterPro" id="IPR013126">
    <property type="entry name" value="Hsp_70_fam"/>
</dbReference>
<dbReference type="NCBIfam" id="NF001413">
    <property type="entry name" value="PRK00290.1"/>
    <property type="match status" value="1"/>
</dbReference>
<dbReference type="NCBIfam" id="TIGR02350">
    <property type="entry name" value="prok_dnaK"/>
    <property type="match status" value="1"/>
</dbReference>
<dbReference type="PANTHER" id="PTHR19375">
    <property type="entry name" value="HEAT SHOCK PROTEIN 70KDA"/>
    <property type="match status" value="1"/>
</dbReference>
<dbReference type="Pfam" id="PF00012">
    <property type="entry name" value="HSP70"/>
    <property type="match status" value="1"/>
</dbReference>
<dbReference type="PRINTS" id="PR00301">
    <property type="entry name" value="HEATSHOCK70"/>
</dbReference>
<dbReference type="SUPFAM" id="SSF53067">
    <property type="entry name" value="Actin-like ATPase domain"/>
    <property type="match status" value="2"/>
</dbReference>
<dbReference type="SUPFAM" id="SSF100934">
    <property type="entry name" value="Heat shock protein 70kD (HSP70), C-terminal subdomain"/>
    <property type="match status" value="1"/>
</dbReference>
<dbReference type="SUPFAM" id="SSF100920">
    <property type="entry name" value="Heat shock protein 70kD (HSP70), peptide-binding domain"/>
    <property type="match status" value="1"/>
</dbReference>
<dbReference type="PROSITE" id="PS00297">
    <property type="entry name" value="HSP70_1"/>
    <property type="match status" value="1"/>
</dbReference>
<dbReference type="PROSITE" id="PS00329">
    <property type="entry name" value="HSP70_2"/>
    <property type="match status" value="1"/>
</dbReference>
<dbReference type="PROSITE" id="PS01036">
    <property type="entry name" value="HSP70_3"/>
    <property type="match status" value="1"/>
</dbReference>
<gene>
    <name evidence="1" type="primary">dnaK</name>
    <name type="ordered locus">ABC1659</name>
</gene>
<name>DNAK_SHOC1</name>
<comment type="function">
    <text evidence="1">Acts as a chaperone.</text>
</comment>
<comment type="induction">
    <text evidence="1">By stress conditions e.g. heat shock.</text>
</comment>
<comment type="similarity">
    <text evidence="1">Belongs to the heat shock protein 70 family.</text>
</comment>
<protein>
    <recommendedName>
        <fullName evidence="1">Chaperone protein DnaK</fullName>
    </recommendedName>
    <alternativeName>
        <fullName evidence="1">HSP70</fullName>
    </alternativeName>
    <alternativeName>
        <fullName evidence="1">Heat shock 70 kDa protein</fullName>
    </alternativeName>
    <alternativeName>
        <fullName evidence="1">Heat shock protein 70</fullName>
    </alternativeName>
</protein>
<organism>
    <name type="scientific">Shouchella clausii (strain KSM-K16)</name>
    <name type="common">Alkalihalobacillus clausii</name>
    <dbReference type="NCBI Taxonomy" id="66692"/>
    <lineage>
        <taxon>Bacteria</taxon>
        <taxon>Bacillati</taxon>
        <taxon>Bacillota</taxon>
        <taxon>Bacilli</taxon>
        <taxon>Bacillales</taxon>
        <taxon>Bacillaceae</taxon>
        <taxon>Shouchella</taxon>
    </lineage>
</organism>
<sequence length="611" mass="65669">MSKIIGIDLGTTNSCVAVMEGGEATVIPNPEGNRTTPSVVAFKDGERLVGEVAKRQAITNPNTVISIKRHMGTDYKVDIEGKSYSPQEISAIILQKLKADAEAYLGEKVTKAVITVPAYFNDSQRQATKDAGKIAGLEVDRIVNEPTAAALAYGLEKEDDQTILVYDLGGGTFDVSILELGDGFFEVKATSGDNKLGGDDFDEVIMDHLVAEFKKENGIDLSQDKMAMQRLKDAAEKAKKDLSGVTQTQISLPFITADATGPKHLELTLTRAKFDELSADLVERTLGPTRRALSDAGLSASDIDKVVLVGGSTRIPAVQEAIKKLTGKDPHKGVNPDEVVALGAAVQAGVLTGDVKDVVLLDVTPLSLGIETMGGVFTKLIERNTTIPTSKSQVFSTAADNQPSVDIHVLQGEREMAADNKTLGRFQLTDIPPAPRGVPQIEVTFDIDANGIVNVKAKDLGTNKEQSITITSSSGLSEEEIDKMVQEAEANAEADKKRREQVELRNEADQLVFSTEKTLKDLGDNVDQAEKDKAEAAKDKLKKALEADNTDDIKAAKDELQEIVTALTTKLYEQAAQAAQAQQDGGNESADKQDDNVVDADYEEVNDDDKK</sequence>
<feature type="chain" id="PRO_0000225933" description="Chaperone protein DnaK">
    <location>
        <begin position="1"/>
        <end position="611"/>
    </location>
</feature>
<feature type="region of interest" description="Disordered" evidence="2">
    <location>
        <begin position="575"/>
        <end position="611"/>
    </location>
</feature>
<feature type="compositionally biased region" description="Acidic residues" evidence="2">
    <location>
        <begin position="596"/>
        <end position="611"/>
    </location>
</feature>
<feature type="modified residue" description="Phosphothreonine; by autocatalysis" evidence="1">
    <location>
        <position position="172"/>
    </location>
</feature>